<proteinExistence type="inferred from homology"/>
<reference key="1">
    <citation type="journal article" date="2004" name="PLoS Biol.">
        <title>Genomic insights into methanotrophy: the complete genome sequence of Methylococcus capsulatus (Bath).</title>
        <authorList>
            <person name="Ward N.L."/>
            <person name="Larsen O."/>
            <person name="Sakwa J."/>
            <person name="Bruseth L."/>
            <person name="Khouri H.M."/>
            <person name="Durkin A.S."/>
            <person name="Dimitrov G."/>
            <person name="Jiang L."/>
            <person name="Scanlan D."/>
            <person name="Kang K.H."/>
            <person name="Lewis M.R."/>
            <person name="Nelson K.E."/>
            <person name="Methe B.A."/>
            <person name="Wu M."/>
            <person name="Heidelberg J.F."/>
            <person name="Paulsen I.T."/>
            <person name="Fouts D.E."/>
            <person name="Ravel J."/>
            <person name="Tettelin H."/>
            <person name="Ren Q."/>
            <person name="Read T.D."/>
            <person name="DeBoy R.T."/>
            <person name="Seshadri R."/>
            <person name="Salzberg S.L."/>
            <person name="Jensen H.B."/>
            <person name="Birkeland N.K."/>
            <person name="Nelson W.C."/>
            <person name="Dodson R.J."/>
            <person name="Grindhaug S.H."/>
            <person name="Holt I.E."/>
            <person name="Eidhammer I."/>
            <person name="Jonasen I."/>
            <person name="Vanaken S."/>
            <person name="Utterback T.R."/>
            <person name="Feldblyum T.V."/>
            <person name="Fraser C.M."/>
            <person name="Lillehaug J.R."/>
            <person name="Eisen J.A."/>
        </authorList>
    </citation>
    <scope>NUCLEOTIDE SEQUENCE [LARGE SCALE GENOMIC DNA]</scope>
    <source>
        <strain>ATCC 33009 / NCIMB 11132 / Bath</strain>
    </source>
</reference>
<keyword id="KW-0408">Iron</keyword>
<keyword id="KW-1185">Reference proteome</keyword>
<sequence>MARRIICAKLGIEADGLDAPPFPGPQGQRIFEHVSKEAWQDWLKLQTMLINEHRLTPFEASARKFLEQEREKFLFGGGTSTPQGYVPPRS</sequence>
<organism>
    <name type="scientific">Methylococcus capsulatus (strain ATCC 33009 / NCIMB 11132 / Bath)</name>
    <dbReference type="NCBI Taxonomy" id="243233"/>
    <lineage>
        <taxon>Bacteria</taxon>
        <taxon>Pseudomonadati</taxon>
        <taxon>Pseudomonadota</taxon>
        <taxon>Gammaproteobacteria</taxon>
        <taxon>Methylococcales</taxon>
        <taxon>Methylococcaceae</taxon>
        <taxon>Methylococcus</taxon>
    </lineage>
</organism>
<protein>
    <recommendedName>
        <fullName evidence="1">Probable Fe(2+)-trafficking protein</fullName>
    </recommendedName>
</protein>
<name>FETP_METCA</name>
<dbReference type="EMBL" id="AE017282">
    <property type="protein sequence ID" value="AAU93044.1"/>
    <property type="molecule type" value="Genomic_DNA"/>
</dbReference>
<dbReference type="RefSeq" id="WP_010960176.1">
    <property type="nucleotide sequence ID" value="NC_002977.6"/>
</dbReference>
<dbReference type="SMR" id="Q60AJ7"/>
<dbReference type="STRING" id="243233.MCA0856"/>
<dbReference type="GeneID" id="88223164"/>
<dbReference type="KEGG" id="mca:MCA0856"/>
<dbReference type="eggNOG" id="COG2924">
    <property type="taxonomic scope" value="Bacteria"/>
</dbReference>
<dbReference type="HOGENOM" id="CLU_170994_0_0_6"/>
<dbReference type="Proteomes" id="UP000006821">
    <property type="component" value="Chromosome"/>
</dbReference>
<dbReference type="GO" id="GO:0005829">
    <property type="term" value="C:cytosol"/>
    <property type="evidence" value="ECO:0007669"/>
    <property type="project" value="TreeGrafter"/>
</dbReference>
<dbReference type="GO" id="GO:0005506">
    <property type="term" value="F:iron ion binding"/>
    <property type="evidence" value="ECO:0007669"/>
    <property type="project" value="UniProtKB-UniRule"/>
</dbReference>
<dbReference type="GO" id="GO:0034599">
    <property type="term" value="P:cellular response to oxidative stress"/>
    <property type="evidence" value="ECO:0007669"/>
    <property type="project" value="TreeGrafter"/>
</dbReference>
<dbReference type="FunFam" id="1.10.3880.10:FF:000001">
    <property type="entry name" value="Probable Fe(2+)-trafficking protein"/>
    <property type="match status" value="1"/>
</dbReference>
<dbReference type="Gene3D" id="1.10.3880.10">
    <property type="entry name" value="Fe(II) trafficking protein YggX"/>
    <property type="match status" value="1"/>
</dbReference>
<dbReference type="HAMAP" id="MF_00686">
    <property type="entry name" value="Fe_traffic_YggX"/>
    <property type="match status" value="1"/>
</dbReference>
<dbReference type="InterPro" id="IPR007457">
    <property type="entry name" value="Fe_traffick_prot_YggX"/>
</dbReference>
<dbReference type="InterPro" id="IPR036766">
    <property type="entry name" value="Fe_traffick_prot_YggX_sf"/>
</dbReference>
<dbReference type="NCBIfam" id="NF003817">
    <property type="entry name" value="PRK05408.1"/>
    <property type="match status" value="1"/>
</dbReference>
<dbReference type="PANTHER" id="PTHR36965">
    <property type="entry name" value="FE(2+)-TRAFFICKING PROTEIN-RELATED"/>
    <property type="match status" value="1"/>
</dbReference>
<dbReference type="PANTHER" id="PTHR36965:SF1">
    <property type="entry name" value="FE(2+)-TRAFFICKING PROTEIN-RELATED"/>
    <property type="match status" value="1"/>
</dbReference>
<dbReference type="Pfam" id="PF04362">
    <property type="entry name" value="Iron_traffic"/>
    <property type="match status" value="1"/>
</dbReference>
<dbReference type="PIRSF" id="PIRSF029827">
    <property type="entry name" value="Fe_traffic_YggX"/>
    <property type="match status" value="1"/>
</dbReference>
<dbReference type="SUPFAM" id="SSF111148">
    <property type="entry name" value="YggX-like"/>
    <property type="match status" value="1"/>
</dbReference>
<comment type="function">
    <text evidence="1">Could be a mediator in iron transactions between iron acquisition and iron-requiring processes, such as synthesis and/or repair of Fe-S clusters in biosynthetic enzymes.</text>
</comment>
<comment type="similarity">
    <text evidence="1">Belongs to the Fe(2+)-trafficking protein family.</text>
</comment>
<evidence type="ECO:0000255" key="1">
    <source>
        <dbReference type="HAMAP-Rule" id="MF_00686"/>
    </source>
</evidence>
<accession>Q60AJ7</accession>
<gene>
    <name type="ordered locus">MCA0856</name>
</gene>
<feature type="chain" id="PRO_0000214490" description="Probable Fe(2+)-trafficking protein">
    <location>
        <begin position="1"/>
        <end position="90"/>
    </location>
</feature>